<feature type="chain" id="PRO_1000201090" description="Phosphoglucosamine mutase">
    <location>
        <begin position="1"/>
        <end position="445"/>
    </location>
</feature>
<feature type="active site" description="Phosphoserine intermediate" evidence="1">
    <location>
        <position position="102"/>
    </location>
</feature>
<feature type="binding site" description="via phosphate group" evidence="1">
    <location>
        <position position="102"/>
    </location>
    <ligand>
        <name>Mg(2+)</name>
        <dbReference type="ChEBI" id="CHEBI:18420"/>
    </ligand>
</feature>
<feature type="binding site" evidence="1">
    <location>
        <position position="241"/>
    </location>
    <ligand>
        <name>Mg(2+)</name>
        <dbReference type="ChEBI" id="CHEBI:18420"/>
    </ligand>
</feature>
<feature type="binding site" evidence="1">
    <location>
        <position position="243"/>
    </location>
    <ligand>
        <name>Mg(2+)</name>
        <dbReference type="ChEBI" id="CHEBI:18420"/>
    </ligand>
</feature>
<feature type="binding site" evidence="1">
    <location>
        <position position="245"/>
    </location>
    <ligand>
        <name>Mg(2+)</name>
        <dbReference type="ChEBI" id="CHEBI:18420"/>
    </ligand>
</feature>
<feature type="modified residue" description="Phosphoserine" evidence="1">
    <location>
        <position position="102"/>
    </location>
</feature>
<reference key="1">
    <citation type="journal article" date="2008" name="J. Bacteriol.">
        <title>The complete genome sequence of Escherichia coli DH10B: insights into the biology of a laboratory workhorse.</title>
        <authorList>
            <person name="Durfee T."/>
            <person name="Nelson R."/>
            <person name="Baldwin S."/>
            <person name="Plunkett G. III"/>
            <person name="Burland V."/>
            <person name="Mau B."/>
            <person name="Petrosino J.F."/>
            <person name="Qin X."/>
            <person name="Muzny D.M."/>
            <person name="Ayele M."/>
            <person name="Gibbs R.A."/>
            <person name="Csorgo B."/>
            <person name="Posfai G."/>
            <person name="Weinstock G.M."/>
            <person name="Blattner F.R."/>
        </authorList>
    </citation>
    <scope>NUCLEOTIDE SEQUENCE [LARGE SCALE GENOMIC DNA]</scope>
    <source>
        <strain>K12 / DH10B</strain>
    </source>
</reference>
<comment type="function">
    <text evidence="1">Catalyzes the conversion of glucosamine-6-phosphate to glucosamine-1-phosphate.</text>
</comment>
<comment type="catalytic activity">
    <reaction evidence="1">
        <text>alpha-D-glucosamine 1-phosphate = D-glucosamine 6-phosphate</text>
        <dbReference type="Rhea" id="RHEA:23424"/>
        <dbReference type="ChEBI" id="CHEBI:58516"/>
        <dbReference type="ChEBI" id="CHEBI:58725"/>
        <dbReference type="EC" id="5.4.2.10"/>
    </reaction>
</comment>
<comment type="cofactor">
    <cofactor evidence="1">
        <name>Mg(2+)</name>
        <dbReference type="ChEBI" id="CHEBI:18420"/>
    </cofactor>
    <text evidence="1">Binds 1 Mg(2+) ion per subunit.</text>
</comment>
<comment type="PTM">
    <text evidence="1">Activated by phosphorylation.</text>
</comment>
<comment type="similarity">
    <text evidence="1">Belongs to the phosphohexose mutase family.</text>
</comment>
<sequence length="445" mass="47544">MSNRKYFGTDGIRGRVGDAPITPDFVLKLGWAAGKVLARHGSRKIIIGKDTRISGYMLESALEAGLAAAGLSALFTGPMPTPAVAYLTRTFRAEAGIVISASHNPFYDNGIKFFSIDGTKLPDAVEEAIEAEMEKEISCVDSAELGKASRIVDAAGRYIEFCKATFPNELSLSELKIVVDCANGATYHIAPNVLRELGANVIAIGCEPNGVNINAEVGATDVRALQARVLAEKADLGIAFDGDGDRVIMVDHEGNKVDGDQIMYIIAREGLRQGQLRGGAVGTLMSNMGLELALKQLGIPFARAKVGDRYVLEKMQEKGWRIGAENSGHVILLDKTTTGDGIVAGLQVLAAMARNHMSLHDLCSGMKMFPQILVNVRYTAGSGDPLEHESVKAVTAEVEAALGNRGRVLLRKSGTEPLIRVMVEGEDEAQVTEFAHRIADAVKAV</sequence>
<protein>
    <recommendedName>
        <fullName evidence="1">Phosphoglucosamine mutase</fullName>
        <ecNumber evidence="1">5.4.2.10</ecNumber>
    </recommendedName>
</protein>
<gene>
    <name evidence="1" type="primary">glmM</name>
    <name type="ordered locus">ECDH10B_3350</name>
</gene>
<name>GLMM_ECODH</name>
<organism>
    <name type="scientific">Escherichia coli (strain K12 / DH10B)</name>
    <dbReference type="NCBI Taxonomy" id="316385"/>
    <lineage>
        <taxon>Bacteria</taxon>
        <taxon>Pseudomonadati</taxon>
        <taxon>Pseudomonadota</taxon>
        <taxon>Gammaproteobacteria</taxon>
        <taxon>Enterobacterales</taxon>
        <taxon>Enterobacteriaceae</taxon>
        <taxon>Escherichia</taxon>
    </lineage>
</organism>
<keyword id="KW-0413">Isomerase</keyword>
<keyword id="KW-0460">Magnesium</keyword>
<keyword id="KW-0479">Metal-binding</keyword>
<keyword id="KW-0597">Phosphoprotein</keyword>
<accession>B1XGY6</accession>
<dbReference type="EC" id="5.4.2.10" evidence="1"/>
<dbReference type="EMBL" id="CP000948">
    <property type="protein sequence ID" value="ACB04253.1"/>
    <property type="molecule type" value="Genomic_DNA"/>
</dbReference>
<dbReference type="RefSeq" id="WP_000071134.1">
    <property type="nucleotide sequence ID" value="NC_010473.1"/>
</dbReference>
<dbReference type="SMR" id="B1XGY6"/>
<dbReference type="GeneID" id="75206032"/>
<dbReference type="KEGG" id="ecd:ECDH10B_3350"/>
<dbReference type="HOGENOM" id="CLU_016950_7_0_6"/>
<dbReference type="GO" id="GO:0005829">
    <property type="term" value="C:cytosol"/>
    <property type="evidence" value="ECO:0007669"/>
    <property type="project" value="TreeGrafter"/>
</dbReference>
<dbReference type="GO" id="GO:0000287">
    <property type="term" value="F:magnesium ion binding"/>
    <property type="evidence" value="ECO:0007669"/>
    <property type="project" value="UniProtKB-UniRule"/>
</dbReference>
<dbReference type="GO" id="GO:0008966">
    <property type="term" value="F:phosphoglucosamine mutase activity"/>
    <property type="evidence" value="ECO:0007669"/>
    <property type="project" value="UniProtKB-UniRule"/>
</dbReference>
<dbReference type="GO" id="GO:0004615">
    <property type="term" value="F:phosphomannomutase activity"/>
    <property type="evidence" value="ECO:0007669"/>
    <property type="project" value="TreeGrafter"/>
</dbReference>
<dbReference type="GO" id="GO:0005975">
    <property type="term" value="P:carbohydrate metabolic process"/>
    <property type="evidence" value="ECO:0007669"/>
    <property type="project" value="InterPro"/>
</dbReference>
<dbReference type="GO" id="GO:0009252">
    <property type="term" value="P:peptidoglycan biosynthetic process"/>
    <property type="evidence" value="ECO:0007669"/>
    <property type="project" value="TreeGrafter"/>
</dbReference>
<dbReference type="GO" id="GO:0006048">
    <property type="term" value="P:UDP-N-acetylglucosamine biosynthetic process"/>
    <property type="evidence" value="ECO:0007669"/>
    <property type="project" value="TreeGrafter"/>
</dbReference>
<dbReference type="CDD" id="cd05802">
    <property type="entry name" value="GlmM"/>
    <property type="match status" value="1"/>
</dbReference>
<dbReference type="FunFam" id="3.30.310.50:FF:000001">
    <property type="entry name" value="Phosphoglucosamine mutase"/>
    <property type="match status" value="1"/>
</dbReference>
<dbReference type="FunFam" id="3.40.120.10:FF:000001">
    <property type="entry name" value="Phosphoglucosamine mutase"/>
    <property type="match status" value="1"/>
</dbReference>
<dbReference type="FunFam" id="3.40.120.10:FF:000002">
    <property type="entry name" value="Phosphoglucosamine mutase"/>
    <property type="match status" value="1"/>
</dbReference>
<dbReference type="Gene3D" id="3.40.120.10">
    <property type="entry name" value="Alpha-D-Glucose-1,6-Bisphosphate, subunit A, domain 3"/>
    <property type="match status" value="3"/>
</dbReference>
<dbReference type="Gene3D" id="3.30.310.50">
    <property type="entry name" value="Alpha-D-phosphohexomutase, C-terminal domain"/>
    <property type="match status" value="1"/>
</dbReference>
<dbReference type="HAMAP" id="MF_01554_B">
    <property type="entry name" value="GlmM_B"/>
    <property type="match status" value="1"/>
</dbReference>
<dbReference type="InterPro" id="IPR005844">
    <property type="entry name" value="A-D-PHexomutase_a/b/a-I"/>
</dbReference>
<dbReference type="InterPro" id="IPR016055">
    <property type="entry name" value="A-D-PHexomutase_a/b/a-I/II/III"/>
</dbReference>
<dbReference type="InterPro" id="IPR005845">
    <property type="entry name" value="A-D-PHexomutase_a/b/a-II"/>
</dbReference>
<dbReference type="InterPro" id="IPR005846">
    <property type="entry name" value="A-D-PHexomutase_a/b/a-III"/>
</dbReference>
<dbReference type="InterPro" id="IPR005843">
    <property type="entry name" value="A-D-PHexomutase_C"/>
</dbReference>
<dbReference type="InterPro" id="IPR036900">
    <property type="entry name" value="A-D-PHexomutase_C_sf"/>
</dbReference>
<dbReference type="InterPro" id="IPR016066">
    <property type="entry name" value="A-D-PHexomutase_CS"/>
</dbReference>
<dbReference type="InterPro" id="IPR005841">
    <property type="entry name" value="Alpha-D-phosphohexomutase_SF"/>
</dbReference>
<dbReference type="InterPro" id="IPR006352">
    <property type="entry name" value="GlmM_bact"/>
</dbReference>
<dbReference type="InterPro" id="IPR050060">
    <property type="entry name" value="Phosphoglucosamine_mutase"/>
</dbReference>
<dbReference type="NCBIfam" id="TIGR01455">
    <property type="entry name" value="glmM"/>
    <property type="match status" value="1"/>
</dbReference>
<dbReference type="NCBIfam" id="NF008139">
    <property type="entry name" value="PRK10887.1"/>
    <property type="match status" value="1"/>
</dbReference>
<dbReference type="PANTHER" id="PTHR42946:SF1">
    <property type="entry name" value="PHOSPHOGLUCOMUTASE (ALPHA-D-GLUCOSE-1,6-BISPHOSPHATE-DEPENDENT)"/>
    <property type="match status" value="1"/>
</dbReference>
<dbReference type="PANTHER" id="PTHR42946">
    <property type="entry name" value="PHOSPHOHEXOSE MUTASE"/>
    <property type="match status" value="1"/>
</dbReference>
<dbReference type="Pfam" id="PF02878">
    <property type="entry name" value="PGM_PMM_I"/>
    <property type="match status" value="1"/>
</dbReference>
<dbReference type="Pfam" id="PF02879">
    <property type="entry name" value="PGM_PMM_II"/>
    <property type="match status" value="1"/>
</dbReference>
<dbReference type="Pfam" id="PF02880">
    <property type="entry name" value="PGM_PMM_III"/>
    <property type="match status" value="1"/>
</dbReference>
<dbReference type="Pfam" id="PF00408">
    <property type="entry name" value="PGM_PMM_IV"/>
    <property type="match status" value="1"/>
</dbReference>
<dbReference type="PRINTS" id="PR00509">
    <property type="entry name" value="PGMPMM"/>
</dbReference>
<dbReference type="SUPFAM" id="SSF55957">
    <property type="entry name" value="Phosphoglucomutase, C-terminal domain"/>
    <property type="match status" value="1"/>
</dbReference>
<dbReference type="SUPFAM" id="SSF53738">
    <property type="entry name" value="Phosphoglucomutase, first 3 domains"/>
    <property type="match status" value="3"/>
</dbReference>
<dbReference type="PROSITE" id="PS00710">
    <property type="entry name" value="PGM_PMM"/>
    <property type="match status" value="1"/>
</dbReference>
<proteinExistence type="inferred from homology"/>
<evidence type="ECO:0000255" key="1">
    <source>
        <dbReference type="HAMAP-Rule" id="MF_01554"/>
    </source>
</evidence>